<sequence length="341" mass="37883">MILLENVKKIYKAKSGDVTAVDNANLKIEKGEIFGVIGYSGAGKSSLIRLFNQLEKPTSGQITIANRVISAITGSELRKARQEIGMIFQHFNLLWSRTVRENIEFPLEIAGVDKAKRRKRVDELIHLVGLEGRGDAYPSQLSGGQKQRVGIARALANNPQVLLCDEATSALDPETTDQILDLLLDINKRLGLTIVLITHEMHVIRKICNRVAVMEKGKIVETGPVLDVFRNPQQDITKRFVQQLTDSEDTNETIESLIEKYPDGKVVRLQFIGEAVERPVLQRLMQRSDIEVSILQGNIAQTNNGSYGSLVVHLNGEETAIQQAIEGIHQDQVELEVIAHG</sequence>
<organism>
    <name type="scientific">Bacillus cereus (strain ATCC 10987 / NRS 248)</name>
    <dbReference type="NCBI Taxonomy" id="222523"/>
    <lineage>
        <taxon>Bacteria</taxon>
        <taxon>Bacillati</taxon>
        <taxon>Bacillota</taxon>
        <taxon>Bacilli</taxon>
        <taxon>Bacillales</taxon>
        <taxon>Bacillaceae</taxon>
        <taxon>Bacillus</taxon>
        <taxon>Bacillus cereus group</taxon>
    </lineage>
</organism>
<comment type="function">
    <text evidence="1">Part of the ABC transporter complex MetNIQ involved in methionine import. Responsible for energy coupling to the transport system.</text>
</comment>
<comment type="catalytic activity">
    <reaction evidence="1">
        <text>L-methionine(out) + ATP + H2O = L-methionine(in) + ADP + phosphate + H(+)</text>
        <dbReference type="Rhea" id="RHEA:29779"/>
        <dbReference type="ChEBI" id="CHEBI:15377"/>
        <dbReference type="ChEBI" id="CHEBI:15378"/>
        <dbReference type="ChEBI" id="CHEBI:30616"/>
        <dbReference type="ChEBI" id="CHEBI:43474"/>
        <dbReference type="ChEBI" id="CHEBI:57844"/>
        <dbReference type="ChEBI" id="CHEBI:456216"/>
        <dbReference type="EC" id="7.4.2.11"/>
    </reaction>
</comment>
<comment type="catalytic activity">
    <reaction evidence="1">
        <text>D-methionine(out) + ATP + H2O = D-methionine(in) + ADP + phosphate + H(+)</text>
        <dbReference type="Rhea" id="RHEA:29767"/>
        <dbReference type="ChEBI" id="CHEBI:15377"/>
        <dbReference type="ChEBI" id="CHEBI:15378"/>
        <dbReference type="ChEBI" id="CHEBI:30616"/>
        <dbReference type="ChEBI" id="CHEBI:43474"/>
        <dbReference type="ChEBI" id="CHEBI:57932"/>
        <dbReference type="ChEBI" id="CHEBI:456216"/>
        <dbReference type="EC" id="7.4.2.11"/>
    </reaction>
</comment>
<comment type="subunit">
    <text evidence="1">The complex is composed of two ATP-binding proteins (MetN), two transmembrane proteins (MetI) and a solute-binding protein (MetQ).</text>
</comment>
<comment type="subcellular location">
    <subcellularLocation>
        <location evidence="1">Cell membrane</location>
        <topology evidence="1">Peripheral membrane protein</topology>
    </subcellularLocation>
</comment>
<comment type="similarity">
    <text evidence="1">Belongs to the ABC transporter superfamily. Methionine importer (TC 3.A.1.24) family.</text>
</comment>
<evidence type="ECO:0000255" key="1">
    <source>
        <dbReference type="HAMAP-Rule" id="MF_01719"/>
    </source>
</evidence>
<dbReference type="EC" id="7.4.2.11" evidence="1"/>
<dbReference type="EMBL" id="AE017194">
    <property type="protein sequence ID" value="AAS44026.1"/>
    <property type="molecule type" value="Genomic_DNA"/>
</dbReference>
<dbReference type="SMR" id="Q72Y96"/>
<dbReference type="KEGG" id="bca:BCE_5125"/>
<dbReference type="HOGENOM" id="CLU_000604_1_3_9"/>
<dbReference type="Proteomes" id="UP000002527">
    <property type="component" value="Chromosome"/>
</dbReference>
<dbReference type="GO" id="GO:0005886">
    <property type="term" value="C:plasma membrane"/>
    <property type="evidence" value="ECO:0007669"/>
    <property type="project" value="UniProtKB-SubCell"/>
</dbReference>
<dbReference type="GO" id="GO:0033232">
    <property type="term" value="F:ABC-type D-methionine transporter activity"/>
    <property type="evidence" value="ECO:0007669"/>
    <property type="project" value="UniProtKB-EC"/>
</dbReference>
<dbReference type="GO" id="GO:0005524">
    <property type="term" value="F:ATP binding"/>
    <property type="evidence" value="ECO:0007669"/>
    <property type="project" value="UniProtKB-KW"/>
</dbReference>
<dbReference type="GO" id="GO:0016887">
    <property type="term" value="F:ATP hydrolysis activity"/>
    <property type="evidence" value="ECO:0007669"/>
    <property type="project" value="InterPro"/>
</dbReference>
<dbReference type="CDD" id="cd03258">
    <property type="entry name" value="ABC_MetN_methionine_transporter"/>
    <property type="match status" value="1"/>
</dbReference>
<dbReference type="FunFam" id="3.30.70.260:FF:000057">
    <property type="entry name" value="Methionine import ATP-binding protein MetN"/>
    <property type="match status" value="1"/>
</dbReference>
<dbReference type="FunFam" id="3.40.50.300:FF:000233">
    <property type="entry name" value="Methionine import ATP-binding protein MetN"/>
    <property type="match status" value="1"/>
</dbReference>
<dbReference type="Gene3D" id="3.30.70.260">
    <property type="match status" value="1"/>
</dbReference>
<dbReference type="Gene3D" id="3.40.50.300">
    <property type="entry name" value="P-loop containing nucleotide triphosphate hydrolases"/>
    <property type="match status" value="1"/>
</dbReference>
<dbReference type="InterPro" id="IPR003593">
    <property type="entry name" value="AAA+_ATPase"/>
</dbReference>
<dbReference type="InterPro" id="IPR003439">
    <property type="entry name" value="ABC_transporter-like_ATP-bd"/>
</dbReference>
<dbReference type="InterPro" id="IPR017871">
    <property type="entry name" value="ABC_transporter-like_CS"/>
</dbReference>
<dbReference type="InterPro" id="IPR045865">
    <property type="entry name" value="ACT-like_dom_sf"/>
</dbReference>
<dbReference type="InterPro" id="IPR041701">
    <property type="entry name" value="MetN_ABC"/>
</dbReference>
<dbReference type="InterPro" id="IPR050086">
    <property type="entry name" value="MetN_ABC_transporter-like"/>
</dbReference>
<dbReference type="InterPro" id="IPR018449">
    <property type="entry name" value="NIL_domain"/>
</dbReference>
<dbReference type="InterPro" id="IPR027417">
    <property type="entry name" value="P-loop_NTPase"/>
</dbReference>
<dbReference type="PANTHER" id="PTHR43166">
    <property type="entry name" value="AMINO ACID IMPORT ATP-BINDING PROTEIN"/>
    <property type="match status" value="1"/>
</dbReference>
<dbReference type="PANTHER" id="PTHR43166:SF36">
    <property type="entry name" value="METHIONINE IMPORT ATP-BINDING PROTEIN METN 2"/>
    <property type="match status" value="1"/>
</dbReference>
<dbReference type="Pfam" id="PF00005">
    <property type="entry name" value="ABC_tran"/>
    <property type="match status" value="1"/>
</dbReference>
<dbReference type="Pfam" id="PF09383">
    <property type="entry name" value="NIL"/>
    <property type="match status" value="1"/>
</dbReference>
<dbReference type="SMART" id="SM00382">
    <property type="entry name" value="AAA"/>
    <property type="match status" value="1"/>
</dbReference>
<dbReference type="SMART" id="SM00930">
    <property type="entry name" value="NIL"/>
    <property type="match status" value="1"/>
</dbReference>
<dbReference type="SUPFAM" id="SSF55021">
    <property type="entry name" value="ACT-like"/>
    <property type="match status" value="1"/>
</dbReference>
<dbReference type="SUPFAM" id="SSF52540">
    <property type="entry name" value="P-loop containing nucleoside triphosphate hydrolases"/>
    <property type="match status" value="1"/>
</dbReference>
<dbReference type="PROSITE" id="PS00211">
    <property type="entry name" value="ABC_TRANSPORTER_1"/>
    <property type="match status" value="1"/>
</dbReference>
<dbReference type="PROSITE" id="PS50893">
    <property type="entry name" value="ABC_TRANSPORTER_2"/>
    <property type="match status" value="1"/>
</dbReference>
<dbReference type="PROSITE" id="PS51264">
    <property type="entry name" value="METN"/>
    <property type="match status" value="1"/>
</dbReference>
<keyword id="KW-0029">Amino-acid transport</keyword>
<keyword id="KW-0067">ATP-binding</keyword>
<keyword id="KW-1003">Cell membrane</keyword>
<keyword id="KW-0472">Membrane</keyword>
<keyword id="KW-0547">Nucleotide-binding</keyword>
<keyword id="KW-1278">Translocase</keyword>
<keyword id="KW-0813">Transport</keyword>
<accession>Q72Y96</accession>
<reference key="1">
    <citation type="journal article" date="2004" name="Nucleic Acids Res.">
        <title>The genome sequence of Bacillus cereus ATCC 10987 reveals metabolic adaptations and a large plasmid related to Bacillus anthracis pXO1.</title>
        <authorList>
            <person name="Rasko D.A."/>
            <person name="Ravel J."/>
            <person name="Oekstad O.A."/>
            <person name="Helgason E."/>
            <person name="Cer R.Z."/>
            <person name="Jiang L."/>
            <person name="Shores K.A."/>
            <person name="Fouts D.E."/>
            <person name="Tourasse N.J."/>
            <person name="Angiuoli S.V."/>
            <person name="Kolonay J.F."/>
            <person name="Nelson W.C."/>
            <person name="Kolstoe A.-B."/>
            <person name="Fraser C.M."/>
            <person name="Read T.D."/>
        </authorList>
    </citation>
    <scope>NUCLEOTIDE SEQUENCE [LARGE SCALE GENOMIC DNA]</scope>
    <source>
        <strain>ATCC 10987 / NRS 248</strain>
    </source>
</reference>
<proteinExistence type="inferred from homology"/>
<gene>
    <name evidence="1" type="primary">metN3</name>
    <name type="ordered locus">BCE_5125</name>
</gene>
<name>METN3_BACC1</name>
<protein>
    <recommendedName>
        <fullName evidence="1">Methionine import ATP-binding protein MetN 3</fullName>
        <ecNumber evidence="1">7.4.2.11</ecNumber>
    </recommendedName>
</protein>
<feature type="chain" id="PRO_0000270234" description="Methionine import ATP-binding protein MetN 3">
    <location>
        <begin position="1"/>
        <end position="341"/>
    </location>
</feature>
<feature type="domain" description="ABC transporter" evidence="1">
    <location>
        <begin position="2"/>
        <end position="241"/>
    </location>
</feature>
<feature type="binding site" evidence="1">
    <location>
        <begin position="38"/>
        <end position="45"/>
    </location>
    <ligand>
        <name>ATP</name>
        <dbReference type="ChEBI" id="CHEBI:30616"/>
    </ligand>
</feature>